<dbReference type="EC" id="2.1.1.192" evidence="1"/>
<dbReference type="EMBL" id="CP000113">
    <property type="protein sequence ID" value="ABF86078.1"/>
    <property type="molecule type" value="Genomic_DNA"/>
</dbReference>
<dbReference type="RefSeq" id="WP_011553573.1">
    <property type="nucleotide sequence ID" value="NC_008095.1"/>
</dbReference>
<dbReference type="SMR" id="Q1D6I6"/>
<dbReference type="STRING" id="246197.MXAN_3544"/>
<dbReference type="EnsemblBacteria" id="ABF86078">
    <property type="protein sequence ID" value="ABF86078"/>
    <property type="gene ID" value="MXAN_3544"/>
</dbReference>
<dbReference type="GeneID" id="41360889"/>
<dbReference type="KEGG" id="mxa:MXAN_3544"/>
<dbReference type="eggNOG" id="COG0820">
    <property type="taxonomic scope" value="Bacteria"/>
</dbReference>
<dbReference type="HOGENOM" id="CLU_029101_2_0_7"/>
<dbReference type="OrthoDB" id="9793973at2"/>
<dbReference type="Proteomes" id="UP000002402">
    <property type="component" value="Chromosome"/>
</dbReference>
<dbReference type="GO" id="GO:0005737">
    <property type="term" value="C:cytoplasm"/>
    <property type="evidence" value="ECO:0007669"/>
    <property type="project" value="UniProtKB-SubCell"/>
</dbReference>
<dbReference type="GO" id="GO:0051539">
    <property type="term" value="F:4 iron, 4 sulfur cluster binding"/>
    <property type="evidence" value="ECO:0007669"/>
    <property type="project" value="UniProtKB-UniRule"/>
</dbReference>
<dbReference type="GO" id="GO:0046872">
    <property type="term" value="F:metal ion binding"/>
    <property type="evidence" value="ECO:0007669"/>
    <property type="project" value="UniProtKB-KW"/>
</dbReference>
<dbReference type="GO" id="GO:0070040">
    <property type="term" value="F:rRNA (adenine(2503)-C2-)-methyltransferase activity"/>
    <property type="evidence" value="ECO:0007669"/>
    <property type="project" value="UniProtKB-UniRule"/>
</dbReference>
<dbReference type="GO" id="GO:0019843">
    <property type="term" value="F:rRNA binding"/>
    <property type="evidence" value="ECO:0007669"/>
    <property type="project" value="UniProtKB-UniRule"/>
</dbReference>
<dbReference type="GO" id="GO:0002935">
    <property type="term" value="F:tRNA (adenine(37)-C2)-methyltransferase activity"/>
    <property type="evidence" value="ECO:0007669"/>
    <property type="project" value="UniProtKB-UniRule"/>
</dbReference>
<dbReference type="GO" id="GO:0000049">
    <property type="term" value="F:tRNA binding"/>
    <property type="evidence" value="ECO:0007669"/>
    <property type="project" value="UniProtKB-UniRule"/>
</dbReference>
<dbReference type="GO" id="GO:0070475">
    <property type="term" value="P:rRNA base methylation"/>
    <property type="evidence" value="ECO:0007669"/>
    <property type="project" value="UniProtKB-UniRule"/>
</dbReference>
<dbReference type="GO" id="GO:0030488">
    <property type="term" value="P:tRNA methylation"/>
    <property type="evidence" value="ECO:0007669"/>
    <property type="project" value="UniProtKB-UniRule"/>
</dbReference>
<dbReference type="CDD" id="cd01335">
    <property type="entry name" value="Radical_SAM"/>
    <property type="match status" value="1"/>
</dbReference>
<dbReference type="FunFam" id="1.10.150.530:FF:000003">
    <property type="entry name" value="Dual-specificity RNA methyltransferase RlmN"/>
    <property type="match status" value="1"/>
</dbReference>
<dbReference type="FunFam" id="3.20.20.70:FF:000014">
    <property type="entry name" value="Probable dual-specificity RNA methyltransferase RlmN"/>
    <property type="match status" value="1"/>
</dbReference>
<dbReference type="Gene3D" id="1.10.150.530">
    <property type="match status" value="1"/>
</dbReference>
<dbReference type="Gene3D" id="3.20.20.70">
    <property type="entry name" value="Aldolase class I"/>
    <property type="match status" value="1"/>
</dbReference>
<dbReference type="HAMAP" id="MF_01849">
    <property type="entry name" value="RNA_methyltr_RlmN"/>
    <property type="match status" value="1"/>
</dbReference>
<dbReference type="InterPro" id="IPR013785">
    <property type="entry name" value="Aldolase_TIM"/>
</dbReference>
<dbReference type="InterPro" id="IPR006638">
    <property type="entry name" value="Elp3/MiaA/NifB-like_rSAM"/>
</dbReference>
<dbReference type="InterPro" id="IPR040072">
    <property type="entry name" value="Methyltransferase_A"/>
</dbReference>
<dbReference type="InterPro" id="IPR048641">
    <property type="entry name" value="RlmN_N"/>
</dbReference>
<dbReference type="InterPro" id="IPR027492">
    <property type="entry name" value="RNA_MTrfase_RlmN"/>
</dbReference>
<dbReference type="InterPro" id="IPR004383">
    <property type="entry name" value="rRNA_lsu_MTrfase_RlmN/Cfr"/>
</dbReference>
<dbReference type="InterPro" id="IPR007197">
    <property type="entry name" value="rSAM"/>
</dbReference>
<dbReference type="NCBIfam" id="TIGR00048">
    <property type="entry name" value="rRNA_mod_RlmN"/>
    <property type="match status" value="1"/>
</dbReference>
<dbReference type="PANTHER" id="PTHR30544">
    <property type="entry name" value="23S RRNA METHYLTRANSFERASE"/>
    <property type="match status" value="1"/>
</dbReference>
<dbReference type="PANTHER" id="PTHR30544:SF5">
    <property type="entry name" value="RADICAL SAM CORE DOMAIN-CONTAINING PROTEIN"/>
    <property type="match status" value="1"/>
</dbReference>
<dbReference type="Pfam" id="PF04055">
    <property type="entry name" value="Radical_SAM"/>
    <property type="match status" value="1"/>
</dbReference>
<dbReference type="Pfam" id="PF21016">
    <property type="entry name" value="RlmN_N"/>
    <property type="match status" value="1"/>
</dbReference>
<dbReference type="PIRSF" id="PIRSF006004">
    <property type="entry name" value="CHP00048"/>
    <property type="match status" value="1"/>
</dbReference>
<dbReference type="SFLD" id="SFLDF00275">
    <property type="entry name" value="adenosine_C2_methyltransferase"/>
    <property type="match status" value="1"/>
</dbReference>
<dbReference type="SFLD" id="SFLDG01062">
    <property type="entry name" value="methyltransferase_(Class_A)"/>
    <property type="match status" value="1"/>
</dbReference>
<dbReference type="SMART" id="SM00729">
    <property type="entry name" value="Elp3"/>
    <property type="match status" value="1"/>
</dbReference>
<dbReference type="SUPFAM" id="SSF102114">
    <property type="entry name" value="Radical SAM enzymes"/>
    <property type="match status" value="1"/>
</dbReference>
<dbReference type="PROSITE" id="PS51918">
    <property type="entry name" value="RADICAL_SAM"/>
    <property type="match status" value="1"/>
</dbReference>
<reference key="1">
    <citation type="journal article" date="2006" name="Proc. Natl. Acad. Sci. U.S.A.">
        <title>Evolution of sensory complexity recorded in a myxobacterial genome.</title>
        <authorList>
            <person name="Goldman B.S."/>
            <person name="Nierman W.C."/>
            <person name="Kaiser D."/>
            <person name="Slater S.C."/>
            <person name="Durkin A.S."/>
            <person name="Eisen J.A."/>
            <person name="Ronning C.M."/>
            <person name="Barbazuk W.B."/>
            <person name="Blanchard M."/>
            <person name="Field C."/>
            <person name="Halling C."/>
            <person name="Hinkle G."/>
            <person name="Iartchuk O."/>
            <person name="Kim H.S."/>
            <person name="Mackenzie C."/>
            <person name="Madupu R."/>
            <person name="Miller N."/>
            <person name="Shvartsbeyn A."/>
            <person name="Sullivan S.A."/>
            <person name="Vaudin M."/>
            <person name="Wiegand R."/>
            <person name="Kaplan H.B."/>
        </authorList>
    </citation>
    <scope>NUCLEOTIDE SEQUENCE [LARGE SCALE GENOMIC DNA]</scope>
    <source>
        <strain>DK1622</strain>
    </source>
</reference>
<keyword id="KW-0004">4Fe-4S</keyword>
<keyword id="KW-0963">Cytoplasm</keyword>
<keyword id="KW-1015">Disulfide bond</keyword>
<keyword id="KW-0408">Iron</keyword>
<keyword id="KW-0411">Iron-sulfur</keyword>
<keyword id="KW-0479">Metal-binding</keyword>
<keyword id="KW-0489">Methyltransferase</keyword>
<keyword id="KW-1185">Reference proteome</keyword>
<keyword id="KW-0698">rRNA processing</keyword>
<keyword id="KW-0949">S-adenosyl-L-methionine</keyword>
<keyword id="KW-0808">Transferase</keyword>
<keyword id="KW-0819">tRNA processing</keyword>
<protein>
    <recommendedName>
        <fullName evidence="1">Dual-specificity RNA methyltransferase RlmN 2</fullName>
        <ecNumber evidence="1">2.1.1.192</ecNumber>
    </recommendedName>
    <alternativeName>
        <fullName evidence="1">23S rRNA (adenine(2503)-C(2))-methyltransferase 2</fullName>
    </alternativeName>
    <alternativeName>
        <fullName evidence="1">23S rRNA m2A2503 methyltransferase 2</fullName>
    </alternativeName>
    <alternativeName>
        <fullName evidence="1">Ribosomal RNA large subunit methyltransferase N 2</fullName>
    </alternativeName>
    <alternativeName>
        <fullName evidence="1">tRNA (adenine(37)-C(2))-methyltransferase 2</fullName>
    </alternativeName>
    <alternativeName>
        <fullName evidence="1">tRNA m2A37 methyltransferase 2</fullName>
    </alternativeName>
</protein>
<proteinExistence type="inferred from homology"/>
<comment type="function">
    <text evidence="1">Specifically methylates position 2 of adenine 2503 in 23S rRNA and position 2 of adenine 37 in tRNAs. m2A2503 modification seems to play a crucial role in the proofreading step occurring at the peptidyl transferase center and thus would serve to optimize ribosomal fidelity.</text>
</comment>
<comment type="catalytic activity">
    <reaction evidence="1">
        <text>adenosine(2503) in 23S rRNA + 2 reduced [2Fe-2S]-[ferredoxin] + 2 S-adenosyl-L-methionine = 2-methyladenosine(2503) in 23S rRNA + 5'-deoxyadenosine + L-methionine + 2 oxidized [2Fe-2S]-[ferredoxin] + S-adenosyl-L-homocysteine</text>
        <dbReference type="Rhea" id="RHEA:42916"/>
        <dbReference type="Rhea" id="RHEA-COMP:10000"/>
        <dbReference type="Rhea" id="RHEA-COMP:10001"/>
        <dbReference type="Rhea" id="RHEA-COMP:10152"/>
        <dbReference type="Rhea" id="RHEA-COMP:10282"/>
        <dbReference type="ChEBI" id="CHEBI:17319"/>
        <dbReference type="ChEBI" id="CHEBI:33737"/>
        <dbReference type="ChEBI" id="CHEBI:33738"/>
        <dbReference type="ChEBI" id="CHEBI:57844"/>
        <dbReference type="ChEBI" id="CHEBI:57856"/>
        <dbReference type="ChEBI" id="CHEBI:59789"/>
        <dbReference type="ChEBI" id="CHEBI:74411"/>
        <dbReference type="ChEBI" id="CHEBI:74497"/>
        <dbReference type="EC" id="2.1.1.192"/>
    </reaction>
</comment>
<comment type="catalytic activity">
    <reaction evidence="1">
        <text>adenosine(37) in tRNA + 2 reduced [2Fe-2S]-[ferredoxin] + 2 S-adenosyl-L-methionine = 2-methyladenosine(37) in tRNA + 5'-deoxyadenosine + L-methionine + 2 oxidized [2Fe-2S]-[ferredoxin] + S-adenosyl-L-homocysteine</text>
        <dbReference type="Rhea" id="RHEA:43332"/>
        <dbReference type="Rhea" id="RHEA-COMP:10000"/>
        <dbReference type="Rhea" id="RHEA-COMP:10001"/>
        <dbReference type="Rhea" id="RHEA-COMP:10162"/>
        <dbReference type="Rhea" id="RHEA-COMP:10485"/>
        <dbReference type="ChEBI" id="CHEBI:17319"/>
        <dbReference type="ChEBI" id="CHEBI:33737"/>
        <dbReference type="ChEBI" id="CHEBI:33738"/>
        <dbReference type="ChEBI" id="CHEBI:57844"/>
        <dbReference type="ChEBI" id="CHEBI:57856"/>
        <dbReference type="ChEBI" id="CHEBI:59789"/>
        <dbReference type="ChEBI" id="CHEBI:74411"/>
        <dbReference type="ChEBI" id="CHEBI:74497"/>
        <dbReference type="EC" id="2.1.1.192"/>
    </reaction>
</comment>
<comment type="cofactor">
    <cofactor evidence="1">
        <name>[4Fe-4S] cluster</name>
        <dbReference type="ChEBI" id="CHEBI:49883"/>
    </cofactor>
    <text evidence="1">Binds 1 [4Fe-4S] cluster. The cluster is coordinated with 3 cysteines and an exchangeable S-adenosyl-L-methionine.</text>
</comment>
<comment type="subcellular location">
    <subcellularLocation>
        <location evidence="1">Cytoplasm</location>
    </subcellularLocation>
</comment>
<comment type="miscellaneous">
    <text evidence="1">Reaction proceeds by a ping-pong mechanism involving intermediate methylation of a conserved cysteine residue.</text>
</comment>
<comment type="similarity">
    <text evidence="1">Belongs to the radical SAM superfamily. RlmN family.</text>
</comment>
<organism>
    <name type="scientific">Myxococcus xanthus (strain DK1622)</name>
    <dbReference type="NCBI Taxonomy" id="246197"/>
    <lineage>
        <taxon>Bacteria</taxon>
        <taxon>Pseudomonadati</taxon>
        <taxon>Myxococcota</taxon>
        <taxon>Myxococcia</taxon>
        <taxon>Myxococcales</taxon>
        <taxon>Cystobacterineae</taxon>
        <taxon>Myxococcaceae</taxon>
        <taxon>Myxococcus</taxon>
    </lineage>
</organism>
<sequence>MSETSATSLPVTEPLPAPAPAKLVDVASLSLEALSRFVTEELGERAFRAPQIYRWLHQRGATSFDEMTDLSKVLREKLRARAEIVPLVKDCELRSTDGTIKYRWKTRDGRYIESVYMPTEDRRTLCVSTQVGCAMACGFCMTGTMGLKRNLTPSEIVAQVHAVNREVRKNEGHETLRPLSNLVFMGMGEPLHNFENLKTALSILQSEDGPNFSHRHITVSTVGLVPMIERFGKETDVKLAISLNASTDEQRSKTMPVNRKWNIAALLDACRKFPLRQGRRITFEYVLIKGFNDADEDAHRLIELLKGIPVKVNLIPYNENPGLGFHTTGEERAEEFRAILADGHVAAYIRRNRGRDIAGACGQLANRGETQAGTDSTT</sequence>
<accession>Q1D6I6</accession>
<name>RLMN2_MYXXD</name>
<evidence type="ECO:0000255" key="1">
    <source>
        <dbReference type="HAMAP-Rule" id="MF_01849"/>
    </source>
</evidence>
<evidence type="ECO:0000255" key="2">
    <source>
        <dbReference type="PROSITE-ProRule" id="PRU01266"/>
    </source>
</evidence>
<gene>
    <name evidence="1" type="primary">rlmN2</name>
    <name type="ordered locus">MXAN_3544</name>
</gene>
<feature type="chain" id="PRO_0000350273" description="Dual-specificity RNA methyltransferase RlmN 2">
    <location>
        <begin position="1"/>
        <end position="378"/>
    </location>
</feature>
<feature type="domain" description="Radical SAM core" evidence="2">
    <location>
        <begin position="119"/>
        <end position="355"/>
    </location>
</feature>
<feature type="active site" description="Proton acceptor" evidence="1">
    <location>
        <position position="113"/>
    </location>
</feature>
<feature type="active site" description="S-methylcysteine intermediate" evidence="1">
    <location>
        <position position="361"/>
    </location>
</feature>
<feature type="binding site" evidence="1">
    <location>
        <position position="133"/>
    </location>
    <ligand>
        <name>[4Fe-4S] cluster</name>
        <dbReference type="ChEBI" id="CHEBI:49883"/>
        <note>4Fe-4S-S-AdoMet</note>
    </ligand>
</feature>
<feature type="binding site" evidence="1">
    <location>
        <position position="137"/>
    </location>
    <ligand>
        <name>[4Fe-4S] cluster</name>
        <dbReference type="ChEBI" id="CHEBI:49883"/>
        <note>4Fe-4S-S-AdoMet</note>
    </ligand>
</feature>
<feature type="binding site" evidence="1">
    <location>
        <position position="140"/>
    </location>
    <ligand>
        <name>[4Fe-4S] cluster</name>
        <dbReference type="ChEBI" id="CHEBI:49883"/>
        <note>4Fe-4S-S-AdoMet</note>
    </ligand>
</feature>
<feature type="binding site" evidence="1">
    <location>
        <begin position="188"/>
        <end position="189"/>
    </location>
    <ligand>
        <name>S-adenosyl-L-methionine</name>
        <dbReference type="ChEBI" id="CHEBI:59789"/>
    </ligand>
</feature>
<feature type="binding site" evidence="1">
    <location>
        <position position="220"/>
    </location>
    <ligand>
        <name>S-adenosyl-L-methionine</name>
        <dbReference type="ChEBI" id="CHEBI:59789"/>
    </ligand>
</feature>
<feature type="binding site" evidence="1">
    <location>
        <begin position="242"/>
        <end position="244"/>
    </location>
    <ligand>
        <name>S-adenosyl-L-methionine</name>
        <dbReference type="ChEBI" id="CHEBI:59789"/>
    </ligand>
</feature>
<feature type="binding site" evidence="1">
    <location>
        <position position="318"/>
    </location>
    <ligand>
        <name>S-adenosyl-L-methionine</name>
        <dbReference type="ChEBI" id="CHEBI:59789"/>
    </ligand>
</feature>
<feature type="disulfide bond" description="(transient)" evidence="1">
    <location>
        <begin position="126"/>
        <end position="361"/>
    </location>
</feature>